<gene>
    <name evidence="1" type="primary">tpiA</name>
    <name type="ordered locus">SeSA_A4297</name>
</gene>
<reference key="1">
    <citation type="journal article" date="2011" name="J. Bacteriol.">
        <title>Comparative genomics of 28 Salmonella enterica isolates: evidence for CRISPR-mediated adaptive sublineage evolution.</title>
        <authorList>
            <person name="Fricke W.F."/>
            <person name="Mammel M.K."/>
            <person name="McDermott P.F."/>
            <person name="Tartera C."/>
            <person name="White D.G."/>
            <person name="Leclerc J.E."/>
            <person name="Ravel J."/>
            <person name="Cebula T.A."/>
        </authorList>
    </citation>
    <scope>NUCLEOTIDE SEQUENCE [LARGE SCALE GENOMIC DNA]</scope>
    <source>
        <strain>CVM19633</strain>
    </source>
</reference>
<evidence type="ECO:0000255" key="1">
    <source>
        <dbReference type="HAMAP-Rule" id="MF_00147"/>
    </source>
</evidence>
<comment type="function">
    <text evidence="1">Involved in the gluconeogenesis. Catalyzes stereospecifically the conversion of dihydroxyacetone phosphate (DHAP) to D-glyceraldehyde-3-phosphate (G3P).</text>
</comment>
<comment type="catalytic activity">
    <reaction evidence="1">
        <text>D-glyceraldehyde 3-phosphate = dihydroxyacetone phosphate</text>
        <dbReference type="Rhea" id="RHEA:18585"/>
        <dbReference type="ChEBI" id="CHEBI:57642"/>
        <dbReference type="ChEBI" id="CHEBI:59776"/>
        <dbReference type="EC" id="5.3.1.1"/>
    </reaction>
</comment>
<comment type="pathway">
    <text evidence="1">Carbohydrate biosynthesis; gluconeogenesis.</text>
</comment>
<comment type="pathway">
    <text evidence="1">Carbohydrate degradation; glycolysis; D-glyceraldehyde 3-phosphate from glycerone phosphate: step 1/1.</text>
</comment>
<comment type="subunit">
    <text evidence="1">Homodimer.</text>
</comment>
<comment type="subcellular location">
    <subcellularLocation>
        <location evidence="1">Cytoplasm</location>
    </subcellularLocation>
</comment>
<comment type="similarity">
    <text evidence="1">Belongs to the triosephosphate isomerase family.</text>
</comment>
<dbReference type="EC" id="5.3.1.1" evidence="1"/>
<dbReference type="EMBL" id="CP001127">
    <property type="protein sequence ID" value="ACF89293.1"/>
    <property type="molecule type" value="Genomic_DNA"/>
</dbReference>
<dbReference type="RefSeq" id="WP_001216339.1">
    <property type="nucleotide sequence ID" value="NC_011094.1"/>
</dbReference>
<dbReference type="SMR" id="B4TPU2"/>
<dbReference type="KEGG" id="sew:SeSA_A4297"/>
<dbReference type="HOGENOM" id="CLU_024251_2_1_6"/>
<dbReference type="UniPathway" id="UPA00109">
    <property type="reaction ID" value="UER00189"/>
</dbReference>
<dbReference type="UniPathway" id="UPA00138"/>
<dbReference type="Proteomes" id="UP000001865">
    <property type="component" value="Chromosome"/>
</dbReference>
<dbReference type="GO" id="GO:0005829">
    <property type="term" value="C:cytosol"/>
    <property type="evidence" value="ECO:0007669"/>
    <property type="project" value="TreeGrafter"/>
</dbReference>
<dbReference type="GO" id="GO:0004807">
    <property type="term" value="F:triose-phosphate isomerase activity"/>
    <property type="evidence" value="ECO:0007669"/>
    <property type="project" value="UniProtKB-UniRule"/>
</dbReference>
<dbReference type="GO" id="GO:0006094">
    <property type="term" value="P:gluconeogenesis"/>
    <property type="evidence" value="ECO:0007669"/>
    <property type="project" value="UniProtKB-UniRule"/>
</dbReference>
<dbReference type="GO" id="GO:0046166">
    <property type="term" value="P:glyceraldehyde-3-phosphate biosynthetic process"/>
    <property type="evidence" value="ECO:0007669"/>
    <property type="project" value="TreeGrafter"/>
</dbReference>
<dbReference type="GO" id="GO:0019563">
    <property type="term" value="P:glycerol catabolic process"/>
    <property type="evidence" value="ECO:0007669"/>
    <property type="project" value="TreeGrafter"/>
</dbReference>
<dbReference type="GO" id="GO:0006096">
    <property type="term" value="P:glycolytic process"/>
    <property type="evidence" value="ECO:0007669"/>
    <property type="project" value="UniProtKB-UniRule"/>
</dbReference>
<dbReference type="CDD" id="cd00311">
    <property type="entry name" value="TIM"/>
    <property type="match status" value="1"/>
</dbReference>
<dbReference type="FunFam" id="3.20.20.70:FF:000020">
    <property type="entry name" value="Triosephosphate isomerase"/>
    <property type="match status" value="1"/>
</dbReference>
<dbReference type="Gene3D" id="3.20.20.70">
    <property type="entry name" value="Aldolase class I"/>
    <property type="match status" value="1"/>
</dbReference>
<dbReference type="HAMAP" id="MF_00147_B">
    <property type="entry name" value="TIM_B"/>
    <property type="match status" value="1"/>
</dbReference>
<dbReference type="InterPro" id="IPR013785">
    <property type="entry name" value="Aldolase_TIM"/>
</dbReference>
<dbReference type="InterPro" id="IPR035990">
    <property type="entry name" value="TIM_sf"/>
</dbReference>
<dbReference type="InterPro" id="IPR022896">
    <property type="entry name" value="TrioseP_Isoase_bac/euk"/>
</dbReference>
<dbReference type="InterPro" id="IPR000652">
    <property type="entry name" value="Triosephosphate_isomerase"/>
</dbReference>
<dbReference type="InterPro" id="IPR020861">
    <property type="entry name" value="Triosephosphate_isomerase_AS"/>
</dbReference>
<dbReference type="NCBIfam" id="TIGR00419">
    <property type="entry name" value="tim"/>
    <property type="match status" value="1"/>
</dbReference>
<dbReference type="PANTHER" id="PTHR21139">
    <property type="entry name" value="TRIOSEPHOSPHATE ISOMERASE"/>
    <property type="match status" value="1"/>
</dbReference>
<dbReference type="PANTHER" id="PTHR21139:SF42">
    <property type="entry name" value="TRIOSEPHOSPHATE ISOMERASE"/>
    <property type="match status" value="1"/>
</dbReference>
<dbReference type="Pfam" id="PF00121">
    <property type="entry name" value="TIM"/>
    <property type="match status" value="1"/>
</dbReference>
<dbReference type="SUPFAM" id="SSF51351">
    <property type="entry name" value="Triosephosphate isomerase (TIM)"/>
    <property type="match status" value="1"/>
</dbReference>
<dbReference type="PROSITE" id="PS00171">
    <property type="entry name" value="TIM_1"/>
    <property type="match status" value="1"/>
</dbReference>
<dbReference type="PROSITE" id="PS51440">
    <property type="entry name" value="TIM_2"/>
    <property type="match status" value="1"/>
</dbReference>
<proteinExistence type="inferred from homology"/>
<keyword id="KW-0963">Cytoplasm</keyword>
<keyword id="KW-0312">Gluconeogenesis</keyword>
<keyword id="KW-0324">Glycolysis</keyword>
<keyword id="KW-0413">Isomerase</keyword>
<name>TPIS_SALSV</name>
<accession>B4TPU2</accession>
<feature type="chain" id="PRO_1000096532" description="Triosephosphate isomerase">
    <location>
        <begin position="1"/>
        <end position="255"/>
    </location>
</feature>
<feature type="active site" description="Electrophile" evidence="1">
    <location>
        <position position="95"/>
    </location>
</feature>
<feature type="active site" description="Proton acceptor" evidence="1">
    <location>
        <position position="167"/>
    </location>
</feature>
<feature type="binding site" evidence="1">
    <location>
        <begin position="9"/>
        <end position="11"/>
    </location>
    <ligand>
        <name>substrate</name>
    </ligand>
</feature>
<feature type="binding site" evidence="1">
    <location>
        <position position="173"/>
    </location>
    <ligand>
        <name>substrate</name>
    </ligand>
</feature>
<feature type="binding site" evidence="1">
    <location>
        <position position="212"/>
    </location>
    <ligand>
        <name>substrate</name>
    </ligand>
</feature>
<feature type="binding site" evidence="1">
    <location>
        <begin position="233"/>
        <end position="234"/>
    </location>
    <ligand>
        <name>substrate</name>
    </ligand>
</feature>
<sequence>MRHPLVMGNWKLNGSRHMVNELVANLRKELTGVAGCDVAIAPPEMYIDLAKRAAAGSHIMLGAQNVDLNLSGAFTGETSAEMLKDIGAQYIIIGHSERRTYHKESDELIAKKFAVLKEQGLTPVLCIGETEAENEAGKTEEVCARQIDAVLKTQGAAAFEGAVIAYEPVWAIGTGKSATPAQAQAVHKFIRDHIAKADAKIAEQVIIQYGGSVNASNAAELFAQPDIDGALVGGASLKADAFAVIVKAAEAAKQA</sequence>
<organism>
    <name type="scientific">Salmonella schwarzengrund (strain CVM19633)</name>
    <dbReference type="NCBI Taxonomy" id="439843"/>
    <lineage>
        <taxon>Bacteria</taxon>
        <taxon>Pseudomonadati</taxon>
        <taxon>Pseudomonadota</taxon>
        <taxon>Gammaproteobacteria</taxon>
        <taxon>Enterobacterales</taxon>
        <taxon>Enterobacteriaceae</taxon>
        <taxon>Salmonella</taxon>
    </lineage>
</organism>
<protein>
    <recommendedName>
        <fullName evidence="1">Triosephosphate isomerase</fullName>
        <shortName evidence="1">TIM</shortName>
        <shortName evidence="1">TPI</shortName>
        <ecNumber evidence="1">5.3.1.1</ecNumber>
    </recommendedName>
    <alternativeName>
        <fullName evidence="1">Triose-phosphate isomerase</fullName>
    </alternativeName>
</protein>